<protein>
    <recommendedName>
        <fullName evidence="1">Probable GTP-binding protein EngB</fullName>
    </recommendedName>
</protein>
<sequence length="241" mass="26254">MSEQDKKQAAIKAAQAAADAVREAQAALAEEGRLLFKKSWIFIRGVPSMKFLPPEGPVEIAFAGRSNVGKSSLINALVGKKGLARTSNTPGRTQELNYFVPDGYSGENGDLPPLALVDMPGYGFAEAPKAQVDAWTRLVFDYLRGRTTLKRVYVLIDARHGIKKNDAEVLDLLDKAAVSYQIVLTKIDKIKPAGVPRLLEETHKLTYKRAACFPGIIATSSEKGQGLDDLRAAIALLLKEY</sequence>
<proteinExistence type="inferred from homology"/>
<dbReference type="EMBL" id="AE008918">
    <property type="protein sequence ID" value="AAL53515.1"/>
    <property type="molecule type" value="Genomic_DNA"/>
</dbReference>
<dbReference type="PIR" id="AH3543">
    <property type="entry name" value="AH3543"/>
</dbReference>
<dbReference type="SMR" id="P64066"/>
<dbReference type="KEGG" id="bme:BMEII0274"/>
<dbReference type="KEGG" id="bmel:DK63_2968"/>
<dbReference type="PATRIC" id="fig|224914.52.peg.3114"/>
<dbReference type="eggNOG" id="COG0218">
    <property type="taxonomic scope" value="Bacteria"/>
</dbReference>
<dbReference type="PhylomeDB" id="P64066"/>
<dbReference type="PRO" id="PR:P64066"/>
<dbReference type="Proteomes" id="UP000000419">
    <property type="component" value="Chromosome II"/>
</dbReference>
<dbReference type="GO" id="GO:0005829">
    <property type="term" value="C:cytosol"/>
    <property type="evidence" value="ECO:0007669"/>
    <property type="project" value="TreeGrafter"/>
</dbReference>
<dbReference type="GO" id="GO:0005525">
    <property type="term" value="F:GTP binding"/>
    <property type="evidence" value="ECO:0007669"/>
    <property type="project" value="UniProtKB-UniRule"/>
</dbReference>
<dbReference type="GO" id="GO:0046872">
    <property type="term" value="F:metal ion binding"/>
    <property type="evidence" value="ECO:0007669"/>
    <property type="project" value="UniProtKB-KW"/>
</dbReference>
<dbReference type="GO" id="GO:0000917">
    <property type="term" value="P:division septum assembly"/>
    <property type="evidence" value="ECO:0007669"/>
    <property type="project" value="UniProtKB-KW"/>
</dbReference>
<dbReference type="CDD" id="cd01876">
    <property type="entry name" value="YihA_EngB"/>
    <property type="match status" value="1"/>
</dbReference>
<dbReference type="Gene3D" id="3.40.50.300">
    <property type="entry name" value="P-loop containing nucleotide triphosphate hydrolases"/>
    <property type="match status" value="1"/>
</dbReference>
<dbReference type="HAMAP" id="MF_00321">
    <property type="entry name" value="GTPase_EngB"/>
    <property type="match status" value="1"/>
</dbReference>
<dbReference type="InterPro" id="IPR030393">
    <property type="entry name" value="G_ENGB_dom"/>
</dbReference>
<dbReference type="InterPro" id="IPR006073">
    <property type="entry name" value="GTP-bd"/>
</dbReference>
<dbReference type="InterPro" id="IPR019987">
    <property type="entry name" value="GTP-bd_ribosome_bio_YsxC"/>
</dbReference>
<dbReference type="InterPro" id="IPR027417">
    <property type="entry name" value="P-loop_NTPase"/>
</dbReference>
<dbReference type="NCBIfam" id="TIGR03598">
    <property type="entry name" value="GTPase_YsxC"/>
    <property type="match status" value="1"/>
</dbReference>
<dbReference type="PANTHER" id="PTHR11649:SF13">
    <property type="entry name" value="ENGB-TYPE G DOMAIN-CONTAINING PROTEIN"/>
    <property type="match status" value="1"/>
</dbReference>
<dbReference type="PANTHER" id="PTHR11649">
    <property type="entry name" value="MSS1/TRME-RELATED GTP-BINDING PROTEIN"/>
    <property type="match status" value="1"/>
</dbReference>
<dbReference type="Pfam" id="PF01926">
    <property type="entry name" value="MMR_HSR1"/>
    <property type="match status" value="1"/>
</dbReference>
<dbReference type="SUPFAM" id="SSF52540">
    <property type="entry name" value="P-loop containing nucleoside triphosphate hydrolases"/>
    <property type="match status" value="1"/>
</dbReference>
<dbReference type="PROSITE" id="PS51706">
    <property type="entry name" value="G_ENGB"/>
    <property type="match status" value="1"/>
</dbReference>
<comment type="function">
    <text evidence="1">Necessary for normal cell division and for the maintenance of normal septation.</text>
</comment>
<comment type="cofactor">
    <cofactor evidence="1">
        <name>Mg(2+)</name>
        <dbReference type="ChEBI" id="CHEBI:18420"/>
    </cofactor>
</comment>
<comment type="similarity">
    <text evidence="1">Belongs to the TRAFAC class TrmE-Era-EngA-EngB-Septin-like GTPase superfamily. EngB GTPase family.</text>
</comment>
<keyword id="KW-0131">Cell cycle</keyword>
<keyword id="KW-0132">Cell division</keyword>
<keyword id="KW-0342">GTP-binding</keyword>
<keyword id="KW-0460">Magnesium</keyword>
<keyword id="KW-0479">Metal-binding</keyword>
<keyword id="KW-0547">Nucleotide-binding</keyword>
<keyword id="KW-0717">Septation</keyword>
<evidence type="ECO:0000255" key="1">
    <source>
        <dbReference type="HAMAP-Rule" id="MF_00321"/>
    </source>
</evidence>
<name>ENGB_BRUME</name>
<reference key="1">
    <citation type="journal article" date="2002" name="Proc. Natl. Acad. Sci. U.S.A.">
        <title>The genome sequence of the facultative intracellular pathogen Brucella melitensis.</title>
        <authorList>
            <person name="DelVecchio V.G."/>
            <person name="Kapatral V."/>
            <person name="Redkar R.J."/>
            <person name="Patra G."/>
            <person name="Mujer C."/>
            <person name="Los T."/>
            <person name="Ivanova N."/>
            <person name="Anderson I."/>
            <person name="Bhattacharyya A."/>
            <person name="Lykidis A."/>
            <person name="Reznik G."/>
            <person name="Jablonski L."/>
            <person name="Larsen N."/>
            <person name="D'Souza M."/>
            <person name="Bernal A."/>
            <person name="Mazur M."/>
            <person name="Goltsman E."/>
            <person name="Selkov E."/>
            <person name="Elzer P.H."/>
            <person name="Hagius S."/>
            <person name="O'Callaghan D."/>
            <person name="Letesson J.-J."/>
            <person name="Haselkorn R."/>
            <person name="Kyrpides N.C."/>
            <person name="Overbeek R."/>
        </authorList>
    </citation>
    <scope>NUCLEOTIDE SEQUENCE [LARGE SCALE GENOMIC DNA]</scope>
    <source>
        <strain>ATCC 23456 / CCUG 17765 / NCTC 10094 / 16M</strain>
    </source>
</reference>
<feature type="chain" id="PRO_0000157737" description="Probable GTP-binding protein EngB">
    <location>
        <begin position="1"/>
        <end position="241"/>
    </location>
</feature>
<feature type="domain" description="EngB-type G" evidence="1">
    <location>
        <begin position="56"/>
        <end position="240"/>
    </location>
</feature>
<feature type="binding site" evidence="1">
    <location>
        <begin position="64"/>
        <end position="71"/>
    </location>
    <ligand>
        <name>GTP</name>
        <dbReference type="ChEBI" id="CHEBI:37565"/>
    </ligand>
</feature>
<feature type="binding site" evidence="1">
    <location>
        <position position="71"/>
    </location>
    <ligand>
        <name>Mg(2+)</name>
        <dbReference type="ChEBI" id="CHEBI:18420"/>
    </ligand>
</feature>
<feature type="binding site" evidence="1">
    <location>
        <begin position="91"/>
        <end position="95"/>
    </location>
    <ligand>
        <name>GTP</name>
        <dbReference type="ChEBI" id="CHEBI:37565"/>
    </ligand>
</feature>
<feature type="binding site" evidence="1">
    <location>
        <position position="93"/>
    </location>
    <ligand>
        <name>Mg(2+)</name>
        <dbReference type="ChEBI" id="CHEBI:18420"/>
    </ligand>
</feature>
<feature type="binding site" evidence="1">
    <location>
        <begin position="118"/>
        <end position="121"/>
    </location>
    <ligand>
        <name>GTP</name>
        <dbReference type="ChEBI" id="CHEBI:37565"/>
    </ligand>
</feature>
<feature type="binding site" evidence="1">
    <location>
        <begin position="185"/>
        <end position="188"/>
    </location>
    <ligand>
        <name>GTP</name>
        <dbReference type="ChEBI" id="CHEBI:37565"/>
    </ligand>
</feature>
<feature type="binding site" evidence="1">
    <location>
        <begin position="219"/>
        <end position="221"/>
    </location>
    <ligand>
        <name>GTP</name>
        <dbReference type="ChEBI" id="CHEBI:37565"/>
    </ligand>
</feature>
<organism>
    <name type="scientific">Brucella melitensis biotype 1 (strain ATCC 23456 / CCUG 17765 / NCTC 10094 / 16M)</name>
    <dbReference type="NCBI Taxonomy" id="224914"/>
    <lineage>
        <taxon>Bacteria</taxon>
        <taxon>Pseudomonadati</taxon>
        <taxon>Pseudomonadota</taxon>
        <taxon>Alphaproteobacteria</taxon>
        <taxon>Hyphomicrobiales</taxon>
        <taxon>Brucellaceae</taxon>
        <taxon>Brucella/Ochrobactrum group</taxon>
        <taxon>Brucella</taxon>
    </lineage>
</organism>
<gene>
    <name evidence="1" type="primary">engB</name>
    <name type="ordered locus">BMEII0274</name>
</gene>
<accession>P64066</accession>
<accession>Q8FV28</accession>
<accession>Q8YDA4</accession>